<name>HIS3_RHOJR</name>
<proteinExistence type="inferred from homology"/>
<reference key="1">
    <citation type="journal article" date="2006" name="Proc. Natl. Acad. Sci. U.S.A.">
        <title>The complete genome of Rhodococcus sp. RHA1 provides insights into a catabolic powerhouse.</title>
        <authorList>
            <person name="McLeod M.P."/>
            <person name="Warren R.L."/>
            <person name="Hsiao W.W.L."/>
            <person name="Araki N."/>
            <person name="Myhre M."/>
            <person name="Fernandes C."/>
            <person name="Miyazawa D."/>
            <person name="Wong W."/>
            <person name="Lillquist A.L."/>
            <person name="Wang D."/>
            <person name="Dosanjh M."/>
            <person name="Hara H."/>
            <person name="Petrescu A."/>
            <person name="Morin R.D."/>
            <person name="Yang G."/>
            <person name="Stott J.M."/>
            <person name="Schein J.E."/>
            <person name="Shin H."/>
            <person name="Smailus D."/>
            <person name="Siddiqui A.S."/>
            <person name="Marra M.A."/>
            <person name="Jones S.J.M."/>
            <person name="Holt R."/>
            <person name="Brinkman F.S.L."/>
            <person name="Miyauchi K."/>
            <person name="Fukuda M."/>
            <person name="Davies J.E."/>
            <person name="Mohn W.W."/>
            <person name="Eltis L.D."/>
        </authorList>
    </citation>
    <scope>NUCLEOTIDE SEQUENCE [LARGE SCALE GENOMIC DNA]</scope>
    <source>
        <strain>RHA1</strain>
    </source>
</reference>
<keyword id="KW-0028">Amino-acid biosynthesis</keyword>
<keyword id="KW-0963">Cytoplasm</keyword>
<keyword id="KW-0368">Histidine biosynthesis</keyword>
<keyword id="KW-0378">Hydrolase</keyword>
<keyword id="KW-0460">Magnesium</keyword>
<keyword id="KW-0479">Metal-binding</keyword>
<keyword id="KW-0862">Zinc</keyword>
<protein>
    <recommendedName>
        <fullName evidence="1">Phosphoribosyl-AMP cyclohydrolase</fullName>
        <shortName evidence="1">PRA-CH</shortName>
        <ecNumber evidence="1">3.5.4.19</ecNumber>
    </recommendedName>
</protein>
<sequence length="114" mass="12653">MSLDPAIASRLKRNEAGLFSAVAQERSTGDVLMVAWMDDEALARTLDTRKGTYYSRSRQQYWVKGETSGHTQYVHEVRLDCDGDTVLLVVDQEGAACHTGTHTCFDTDVLLAVE</sequence>
<dbReference type="EC" id="3.5.4.19" evidence="1"/>
<dbReference type="EMBL" id="CP000431">
    <property type="protein sequence ID" value="ABG92848.1"/>
    <property type="molecule type" value="Genomic_DNA"/>
</dbReference>
<dbReference type="RefSeq" id="WP_009473672.1">
    <property type="nucleotide sequence ID" value="NC_008268.1"/>
</dbReference>
<dbReference type="SMR" id="Q0SHY8"/>
<dbReference type="KEGG" id="rha:RHA1_ro01021"/>
<dbReference type="eggNOG" id="COG0139">
    <property type="taxonomic scope" value="Bacteria"/>
</dbReference>
<dbReference type="HOGENOM" id="CLU_048577_5_1_11"/>
<dbReference type="OrthoDB" id="9795769at2"/>
<dbReference type="UniPathway" id="UPA00031">
    <property type="reaction ID" value="UER00008"/>
</dbReference>
<dbReference type="Proteomes" id="UP000008710">
    <property type="component" value="Chromosome"/>
</dbReference>
<dbReference type="GO" id="GO:0005737">
    <property type="term" value="C:cytoplasm"/>
    <property type="evidence" value="ECO:0007669"/>
    <property type="project" value="UniProtKB-SubCell"/>
</dbReference>
<dbReference type="GO" id="GO:0000287">
    <property type="term" value="F:magnesium ion binding"/>
    <property type="evidence" value="ECO:0007669"/>
    <property type="project" value="UniProtKB-UniRule"/>
</dbReference>
<dbReference type="GO" id="GO:0004635">
    <property type="term" value="F:phosphoribosyl-AMP cyclohydrolase activity"/>
    <property type="evidence" value="ECO:0007669"/>
    <property type="project" value="UniProtKB-UniRule"/>
</dbReference>
<dbReference type="GO" id="GO:0008270">
    <property type="term" value="F:zinc ion binding"/>
    <property type="evidence" value="ECO:0007669"/>
    <property type="project" value="UniProtKB-UniRule"/>
</dbReference>
<dbReference type="GO" id="GO:0000105">
    <property type="term" value="P:L-histidine biosynthetic process"/>
    <property type="evidence" value="ECO:0007669"/>
    <property type="project" value="UniProtKB-UniRule"/>
</dbReference>
<dbReference type="FunFam" id="3.10.20.810:FF:000001">
    <property type="entry name" value="Histidine biosynthesis bifunctional protein HisIE"/>
    <property type="match status" value="1"/>
</dbReference>
<dbReference type="Gene3D" id="3.10.20.810">
    <property type="entry name" value="Phosphoribosyl-AMP cyclohydrolase"/>
    <property type="match status" value="1"/>
</dbReference>
<dbReference type="HAMAP" id="MF_01021">
    <property type="entry name" value="HisI"/>
    <property type="match status" value="1"/>
</dbReference>
<dbReference type="InterPro" id="IPR026660">
    <property type="entry name" value="PRA-CH"/>
</dbReference>
<dbReference type="InterPro" id="IPR002496">
    <property type="entry name" value="PRib_AMP_CycHydrolase_dom"/>
</dbReference>
<dbReference type="InterPro" id="IPR038019">
    <property type="entry name" value="PRib_AMP_CycHydrolase_sf"/>
</dbReference>
<dbReference type="NCBIfam" id="NF000768">
    <property type="entry name" value="PRK00051.1"/>
    <property type="match status" value="1"/>
</dbReference>
<dbReference type="PANTHER" id="PTHR42945">
    <property type="entry name" value="HISTIDINE BIOSYNTHESIS BIFUNCTIONAL PROTEIN"/>
    <property type="match status" value="1"/>
</dbReference>
<dbReference type="PANTHER" id="PTHR42945:SF11">
    <property type="entry name" value="PHOSPHORIBOSYL-AMP CYCLOHYDROLASE"/>
    <property type="match status" value="1"/>
</dbReference>
<dbReference type="Pfam" id="PF01502">
    <property type="entry name" value="PRA-CH"/>
    <property type="match status" value="1"/>
</dbReference>
<dbReference type="SUPFAM" id="SSF141734">
    <property type="entry name" value="HisI-like"/>
    <property type="match status" value="1"/>
</dbReference>
<comment type="function">
    <text evidence="1">Catalyzes the hydrolysis of the adenine ring of phosphoribosyl-AMP.</text>
</comment>
<comment type="catalytic activity">
    <reaction evidence="1">
        <text>1-(5-phospho-beta-D-ribosyl)-5'-AMP + H2O = 1-(5-phospho-beta-D-ribosyl)-5-[(5-phospho-beta-D-ribosylamino)methylideneamino]imidazole-4-carboxamide</text>
        <dbReference type="Rhea" id="RHEA:20049"/>
        <dbReference type="ChEBI" id="CHEBI:15377"/>
        <dbReference type="ChEBI" id="CHEBI:58435"/>
        <dbReference type="ChEBI" id="CHEBI:59457"/>
        <dbReference type="EC" id="3.5.4.19"/>
    </reaction>
</comment>
<comment type="cofactor">
    <cofactor evidence="1">
        <name>Mg(2+)</name>
        <dbReference type="ChEBI" id="CHEBI:18420"/>
    </cofactor>
    <text evidence="1">Binds 1 Mg(2+) ion per subunit.</text>
</comment>
<comment type="cofactor">
    <cofactor evidence="1">
        <name>Zn(2+)</name>
        <dbReference type="ChEBI" id="CHEBI:29105"/>
    </cofactor>
    <text evidence="1">Binds 1 zinc ion per subunit.</text>
</comment>
<comment type="pathway">
    <text evidence="1">Amino-acid biosynthesis; L-histidine biosynthesis; L-histidine from 5-phospho-alpha-D-ribose 1-diphosphate: step 3/9.</text>
</comment>
<comment type="subunit">
    <text evidence="1">Homodimer.</text>
</comment>
<comment type="subcellular location">
    <subcellularLocation>
        <location evidence="1">Cytoplasm</location>
    </subcellularLocation>
</comment>
<comment type="similarity">
    <text evidence="1">Belongs to the PRA-CH family.</text>
</comment>
<organism>
    <name type="scientific">Rhodococcus jostii (strain RHA1)</name>
    <dbReference type="NCBI Taxonomy" id="101510"/>
    <lineage>
        <taxon>Bacteria</taxon>
        <taxon>Bacillati</taxon>
        <taxon>Actinomycetota</taxon>
        <taxon>Actinomycetes</taxon>
        <taxon>Mycobacteriales</taxon>
        <taxon>Nocardiaceae</taxon>
        <taxon>Rhodococcus</taxon>
    </lineage>
</organism>
<feature type="chain" id="PRO_1000063433" description="Phosphoribosyl-AMP cyclohydrolase">
    <location>
        <begin position="1"/>
        <end position="114"/>
    </location>
</feature>
<feature type="binding site" evidence="1">
    <location>
        <position position="80"/>
    </location>
    <ligand>
        <name>Mg(2+)</name>
        <dbReference type="ChEBI" id="CHEBI:18420"/>
    </ligand>
</feature>
<feature type="binding site" evidence="1">
    <location>
        <position position="81"/>
    </location>
    <ligand>
        <name>Zn(2+)</name>
        <dbReference type="ChEBI" id="CHEBI:29105"/>
        <note>ligand shared between dimeric partners</note>
    </ligand>
</feature>
<feature type="binding site" evidence="1">
    <location>
        <position position="82"/>
    </location>
    <ligand>
        <name>Mg(2+)</name>
        <dbReference type="ChEBI" id="CHEBI:18420"/>
    </ligand>
</feature>
<feature type="binding site" evidence="1">
    <location>
        <position position="84"/>
    </location>
    <ligand>
        <name>Mg(2+)</name>
        <dbReference type="ChEBI" id="CHEBI:18420"/>
    </ligand>
</feature>
<feature type="binding site" evidence="1">
    <location>
        <position position="97"/>
    </location>
    <ligand>
        <name>Zn(2+)</name>
        <dbReference type="ChEBI" id="CHEBI:29105"/>
        <note>ligand shared between dimeric partners</note>
    </ligand>
</feature>
<feature type="binding site" evidence="1">
    <location>
        <position position="104"/>
    </location>
    <ligand>
        <name>Zn(2+)</name>
        <dbReference type="ChEBI" id="CHEBI:29105"/>
        <note>ligand shared between dimeric partners</note>
    </ligand>
</feature>
<accession>Q0SHY8</accession>
<evidence type="ECO:0000255" key="1">
    <source>
        <dbReference type="HAMAP-Rule" id="MF_01021"/>
    </source>
</evidence>
<gene>
    <name evidence="1" type="primary">hisI</name>
    <name type="ordered locus">RHA1_ro01021</name>
</gene>